<keyword id="KW-0175">Coiled coil</keyword>
<keyword id="KW-0325">Glycoprotein</keyword>
<keyword id="KW-0378">Hydrolase</keyword>
<keyword id="KW-0442">Lipid degradation</keyword>
<keyword id="KW-0443">Lipid metabolism</keyword>
<keyword id="KW-0611">Plant defense</keyword>
<keyword id="KW-1185">Reference proteome</keyword>
<keyword id="KW-0732">Signal</keyword>
<keyword id="KW-0758">Storage protein</keyword>
<keyword id="KW-0926">Vacuole</keyword>
<evidence type="ECO:0000250" key="1"/>
<evidence type="ECO:0000255" key="2"/>
<evidence type="ECO:0000255" key="3">
    <source>
        <dbReference type="PROSITE-ProRule" id="PRU01161"/>
    </source>
</evidence>
<evidence type="ECO:0000269" key="4">
    <source>
    </source>
</evidence>
<evidence type="ECO:0000305" key="5"/>
<gene>
    <name type="ORF">StPat14K07.03</name>
</gene>
<comment type="function">
    <text evidence="1">Probable lipolytic acyl hydrolase (LAH), an activity which is thought to be involved in the response of tubers to pathogens.</text>
</comment>
<comment type="subcellular location">
    <subcellularLocation>
        <location evidence="1">Vacuole</location>
    </subcellularLocation>
</comment>
<comment type="tissue specificity">
    <text evidence="4">Tuber and stolon.</text>
</comment>
<comment type="developmental stage">
    <text evidence="4">Accumulates progressively during tuber formation from stolon.</text>
</comment>
<comment type="domain">
    <text>The nitrogen atoms of the two glycine residues in the GGXR motif define the oxyanion hole, and stabilize the oxyanion that forms during the nucleophilic attack by the catalytic serine during substrate cleavage.</text>
</comment>
<comment type="miscellaneous">
    <text>Patatin have a dual role as a somatic storage protein and as an enzyme involved in host resistance.</text>
</comment>
<comment type="similarity">
    <text evidence="5">Belongs to the patatin family.</text>
</comment>
<name>PAT02_SOLTU</name>
<dbReference type="EC" id="3.1.1.-"/>
<dbReference type="EMBL" id="DQ274478">
    <property type="protein sequence ID" value="ABC55678.1"/>
    <property type="molecule type" value="mRNA"/>
</dbReference>
<dbReference type="EMBL" id="DQ274489">
    <property type="protein sequence ID" value="ABC55689.1"/>
    <property type="molecule type" value="mRNA"/>
</dbReference>
<dbReference type="EMBL" id="DQ274179">
    <property type="protein sequence ID" value="ABC58769.1"/>
    <property type="molecule type" value="Genomic_DNA"/>
</dbReference>
<dbReference type="SMR" id="Q2MY60"/>
<dbReference type="InParanoid" id="Q2MY60"/>
<dbReference type="Proteomes" id="UP000011115">
    <property type="component" value="Unassembled WGS sequence"/>
</dbReference>
<dbReference type="ExpressionAtlas" id="Q2MY60">
    <property type="expression patterns" value="baseline and differential"/>
</dbReference>
<dbReference type="GO" id="GO:0005773">
    <property type="term" value="C:vacuole"/>
    <property type="evidence" value="ECO:0007669"/>
    <property type="project" value="UniProtKB-SubCell"/>
</dbReference>
<dbReference type="GO" id="GO:0047372">
    <property type="term" value="F:monoacylglycerol lipase activity"/>
    <property type="evidence" value="ECO:0000318"/>
    <property type="project" value="GO_Central"/>
</dbReference>
<dbReference type="GO" id="GO:0045735">
    <property type="term" value="F:nutrient reservoir activity"/>
    <property type="evidence" value="ECO:0007669"/>
    <property type="project" value="UniProtKB-KW"/>
</dbReference>
<dbReference type="GO" id="GO:0004620">
    <property type="term" value="F:phospholipase activity"/>
    <property type="evidence" value="ECO:0000318"/>
    <property type="project" value="GO_Central"/>
</dbReference>
<dbReference type="GO" id="GO:0006952">
    <property type="term" value="P:defense response"/>
    <property type="evidence" value="ECO:0007669"/>
    <property type="project" value="UniProtKB-KW"/>
</dbReference>
<dbReference type="GO" id="GO:0016042">
    <property type="term" value="P:lipid catabolic process"/>
    <property type="evidence" value="ECO:0007669"/>
    <property type="project" value="UniProtKB-KW"/>
</dbReference>
<dbReference type="Gene3D" id="3.40.1090.10">
    <property type="entry name" value="Cytosolic phospholipase A2 catalytic domain"/>
    <property type="match status" value="1"/>
</dbReference>
<dbReference type="InterPro" id="IPR016035">
    <property type="entry name" value="Acyl_Trfase/lysoPLipase"/>
</dbReference>
<dbReference type="InterPro" id="IPR002641">
    <property type="entry name" value="PNPLA_dom"/>
</dbReference>
<dbReference type="PANTHER" id="PTHR32176:SF85">
    <property type="entry name" value="PATATIN GROUP D-2"/>
    <property type="match status" value="1"/>
</dbReference>
<dbReference type="PANTHER" id="PTHR32176">
    <property type="entry name" value="XYLOSE ISOMERASE"/>
    <property type="match status" value="1"/>
</dbReference>
<dbReference type="Pfam" id="PF01734">
    <property type="entry name" value="Patatin"/>
    <property type="match status" value="1"/>
</dbReference>
<dbReference type="SUPFAM" id="SSF52151">
    <property type="entry name" value="FabD/lysophospholipase-like"/>
    <property type="match status" value="1"/>
</dbReference>
<dbReference type="PROSITE" id="PS51635">
    <property type="entry name" value="PNPLA"/>
    <property type="match status" value="1"/>
</dbReference>
<feature type="signal peptide" evidence="2">
    <location>
        <begin position="1"/>
        <end position="23"/>
    </location>
</feature>
<feature type="chain" id="PRO_0000296688" description="Patatin-02">
    <location>
        <begin position="24"/>
        <end position="387"/>
    </location>
</feature>
<feature type="domain" description="PNPLA" evidence="3">
    <location>
        <begin position="32"/>
        <end position="230"/>
    </location>
</feature>
<feature type="coiled-coil region" evidence="2">
    <location>
        <begin position="361"/>
        <end position="385"/>
    </location>
</feature>
<feature type="short sequence motif" description="GXGXXG" evidence="3">
    <location>
        <begin position="36"/>
        <end position="41"/>
    </location>
</feature>
<feature type="short sequence motif" description="GXSXG" evidence="3">
    <location>
        <begin position="75"/>
        <end position="79"/>
    </location>
</feature>
<feature type="short sequence motif" description="DGA/G" evidence="3">
    <location>
        <begin position="216"/>
        <end position="218"/>
    </location>
</feature>
<feature type="active site" description="Nucleophile" evidence="3">
    <location>
        <position position="77"/>
    </location>
</feature>
<feature type="active site" description="Proton acceptor" evidence="3">
    <location>
        <position position="216"/>
    </location>
</feature>
<feature type="glycosylation site" description="N-linked (GlcNAc...) asparagine" evidence="2">
    <location>
        <position position="115"/>
    </location>
</feature>
<reference key="1">
    <citation type="journal article" date="2006" name="Genetics">
        <title>Structural diversity and differential transcription of the patatin multicopy gene family during potato tuber development.</title>
        <authorList>
            <person name="Stupar R.M."/>
            <person name="Beaubien K.A."/>
            <person name="Jin W."/>
            <person name="Song J."/>
            <person name="Lee M.-K."/>
            <person name="Wu C."/>
            <person name="Zhang H.-B."/>
            <person name="Han B."/>
            <person name="Jiang J."/>
        </authorList>
    </citation>
    <scope>NUCLEOTIDE SEQUENCE [GENOMIC DNA / MRNA]</scope>
    <scope>DEVELOPMENTAL STAGE</scope>
    <scope>TISSUE SPECIFICITY</scope>
    <source>
        <strain>cv. Kennebec</strain>
    </source>
</reference>
<proteinExistence type="evidence at transcript level"/>
<protein>
    <recommendedName>
        <fullName>Patatin-02</fullName>
        <ecNumber>3.1.1.-</ecNumber>
    </recommendedName>
    <alternativeName>
        <fullName>Patatin group A-1</fullName>
    </alternativeName>
</protein>
<sequence>MATTKSFLILIVMILATTSSTFASLEEMVTVLSIDGGGIKGIIPGTILEFLEGQLQKMDNNADARLADYFDVIGGTSTGGLLTAMITTPNENNRPFAAANEIVPFYFEHGPHIFNSSTGQFFGPKYDGKYLMQVLQEKLGETRVHQALTEVAISSFDIKTNKPVIFTKSNLAKSPELDAKMYDICYSTAAAPTYFPPHYFATNTINGDKYEFNLVDGAVATVADPALLSVSVATRRAQEDPAFASIRSLNYKKMLLLSLGTGTTSEFDKTHTAEETAKWGALQWMLVIQQMTEAASSYMTDYYLSTVFQDLHSQNNYLRVQENALTGTTTKADDASEANMELLAQVGENLLKKPVSKDNPETYEEALKRFAKLLSDRKKLRANKASY</sequence>
<accession>Q2MY60</accession>
<organism>
    <name type="scientific">Solanum tuberosum</name>
    <name type="common">Potato</name>
    <dbReference type="NCBI Taxonomy" id="4113"/>
    <lineage>
        <taxon>Eukaryota</taxon>
        <taxon>Viridiplantae</taxon>
        <taxon>Streptophyta</taxon>
        <taxon>Embryophyta</taxon>
        <taxon>Tracheophyta</taxon>
        <taxon>Spermatophyta</taxon>
        <taxon>Magnoliopsida</taxon>
        <taxon>eudicotyledons</taxon>
        <taxon>Gunneridae</taxon>
        <taxon>Pentapetalae</taxon>
        <taxon>asterids</taxon>
        <taxon>lamiids</taxon>
        <taxon>Solanales</taxon>
        <taxon>Solanaceae</taxon>
        <taxon>Solanoideae</taxon>
        <taxon>Solaneae</taxon>
        <taxon>Solanum</taxon>
    </lineage>
</organism>